<feature type="chain" id="PRO_0000050978" description="Polycomb group protein FIE1">
    <location>
        <begin position="1"/>
        <end position="461"/>
    </location>
</feature>
<feature type="repeat" description="WD 1">
    <location>
        <begin position="143"/>
        <end position="186"/>
    </location>
</feature>
<feature type="repeat" description="WD 2">
    <location>
        <begin position="189"/>
        <end position="229"/>
    </location>
</feature>
<feature type="repeat" description="WD 3">
    <location>
        <begin position="235"/>
        <end position="275"/>
    </location>
</feature>
<feature type="repeat" description="WD 4">
    <location>
        <begin position="301"/>
        <end position="338"/>
    </location>
</feature>
<feature type="repeat" description="WD 5">
    <location>
        <begin position="351"/>
        <end position="391"/>
    </location>
</feature>
<feature type="repeat" description="WD 6">
    <location>
        <begin position="398"/>
        <end position="437"/>
    </location>
</feature>
<feature type="region of interest" description="Disordered" evidence="2">
    <location>
        <begin position="1"/>
        <end position="56"/>
    </location>
</feature>
<feature type="region of interest" description="Disordered" evidence="2">
    <location>
        <begin position="429"/>
        <end position="461"/>
    </location>
</feature>
<feature type="compositionally biased region" description="Basic residues" evidence="2">
    <location>
        <begin position="1"/>
        <end position="11"/>
    </location>
</feature>
<feature type="compositionally biased region" description="Polar residues" evidence="2">
    <location>
        <begin position="18"/>
        <end position="37"/>
    </location>
</feature>
<feature type="compositionally biased region" description="Basic and acidic residues" evidence="2">
    <location>
        <begin position="38"/>
        <end position="47"/>
    </location>
</feature>
<feature type="compositionally biased region" description="Low complexity" evidence="2">
    <location>
        <begin position="432"/>
        <end position="448"/>
    </location>
</feature>
<feature type="sequence conflict" description="In Ref. 2; AAO26659." evidence="5" ref="2">
    <original>T</original>
    <variation>P</variation>
    <location>
        <position position="23"/>
    </location>
</feature>
<feature type="sequence conflict" description="In Ref. 2; AAO26659." evidence="5" ref="2">
    <original>Q</original>
    <variation>H</variation>
    <location>
        <position position="40"/>
    </location>
</feature>
<feature type="sequence conflict" description="In Ref. 2; AAO26659." evidence="5" ref="2">
    <location>
        <begin position="447"/>
        <end position="450"/>
    </location>
</feature>
<reference key="1">
    <citation type="journal article" date="2002" name="Plant Physiol.">
        <title>Sequence relationships, conserved domains, and expression patterns for maize homologs of the Polycomb group genes E(z), esc, and E(Pc).</title>
        <authorList>
            <person name="Springer N.M."/>
            <person name="Danilevskaya O.N."/>
            <person name="Hermon P."/>
            <person name="Helentjaris T.G."/>
            <person name="Phillips R.L."/>
            <person name="Kaeppler H.F."/>
            <person name="Kaeppler S.M."/>
        </authorList>
    </citation>
    <scope>NUCLEOTIDE SEQUENCE [MRNA]</scope>
    <scope>TISSUE SPECIFICITY</scope>
    <scope>DEVELOPMENTAL STAGE</scope>
    <source>
        <tissue>Seed</tissue>
    </source>
</reference>
<reference key="2">
    <citation type="journal article" date="2003" name="Plant Cell">
        <title>Duplicated fie genes in maize: expression pattern and imprinting suggest distinct functions.</title>
        <authorList>
            <person name="Danilevskaya O.N."/>
            <person name="Hermon P."/>
            <person name="Hantke S."/>
            <person name="Muszynski M.G."/>
            <person name="Kollipara K."/>
            <person name="Ananiev E.V."/>
        </authorList>
    </citation>
    <scope>NUCLEOTIDE SEQUENCE [GENOMIC DNA]</scope>
    <scope>TISSUE SPECIFICITY</scope>
</reference>
<accession>Q8VZY7</accession>
<accession>Q84YB5</accession>
<comment type="function">
    <text evidence="1">Polycomb group (PcG) protein. PcG proteins act by forming multiprotein complexes, which are required to maintain the transcriptionally repressive state of homeotic genes throughout development. PcG proteins are not required to initiate repression, but to maintain it during later stages of development. They probably act via the methylation of histones, rendering chromatin heritably changed in its expressibility (By similarity).</text>
</comment>
<comment type="subcellular location">
    <subcellularLocation>
        <location evidence="5">Nucleus</location>
    </subcellularLocation>
</comment>
<comment type="tissue specificity">
    <text evidence="3 4">Specifically expressed in kernel starting from 6 days after pollination.</text>
</comment>
<comment type="developmental stage">
    <text evidence="3">Expressed in embryo and endosperm.</text>
</comment>
<comment type="similarity">
    <text evidence="5">Belongs to the WD repeat ESC family.</text>
</comment>
<sequence>MPPSKARRKRSLRDITATVATGTVANSKPGSSSTNEGKQQDKKKEGPQEPDIPPLPPVVVNIVPRQGLGCEVVEGLLVPSRKREYKPNSKYTVGNHPIYAIGFNFIDMRYYDVFAIASCNSVIIYRCLENGGFGLLQNYVDEDKDESFYTLSWTIDQVDSSPLLVAAGSNRIIRVINCATEKLDKSLVGHGGSIHEIRTHASKPSLIISASKDESIRLWNVHTGICILVFAGAGGHRHDVLSVDFHPTEVGIFASCGMDNTVKIWSMKEFWIYVEKSYSWTGHPSKFPTRNIQFPVLTAAVHSDYVDCTRWLGDFILSKSVKNAVLLWEPKPDKRRPGEGSVDVLQKYPVPKCSLWFMKFSCDFYSNQMAIGNNKGEIYVWEVQSSPPVLIDRLCNQECKSPIRQTAVSFDGSTILGAADDGAIWRWDEVDPAASSSKPDQAAAPAAGVGAGAGADADADA</sequence>
<keyword id="KW-0156">Chromatin regulator</keyword>
<keyword id="KW-0217">Developmental protein</keyword>
<keyword id="KW-0539">Nucleus</keyword>
<keyword id="KW-1185">Reference proteome</keyword>
<keyword id="KW-0677">Repeat</keyword>
<keyword id="KW-0678">Repressor</keyword>
<keyword id="KW-0804">Transcription</keyword>
<keyword id="KW-0805">Transcription regulation</keyword>
<keyword id="KW-0853">WD repeat</keyword>
<gene>
    <name type="primary">FIE1</name>
</gene>
<evidence type="ECO:0000250" key="1"/>
<evidence type="ECO:0000256" key="2">
    <source>
        <dbReference type="SAM" id="MobiDB-lite"/>
    </source>
</evidence>
<evidence type="ECO:0000269" key="3">
    <source>
    </source>
</evidence>
<evidence type="ECO:0000269" key="4">
    <source>
    </source>
</evidence>
<evidence type="ECO:0000305" key="5"/>
<name>FIE1_MAIZE</name>
<proteinExistence type="evidence at transcript level"/>
<protein>
    <recommendedName>
        <fullName>Polycomb group protein FIE1</fullName>
    </recommendedName>
    <alternativeName>
        <fullName>Protein FERTILIZATION-INDEPENDENT ENDOSPERM 1</fullName>
    </alternativeName>
</protein>
<dbReference type="EMBL" id="AY061964">
    <property type="protein sequence ID" value="AAL35973.1"/>
    <property type="molecule type" value="mRNA"/>
</dbReference>
<dbReference type="EMBL" id="AY150645">
    <property type="protein sequence ID" value="AAO26659.1"/>
    <property type="molecule type" value="Genomic_DNA"/>
</dbReference>
<dbReference type="RefSeq" id="NP_001105181.1">
    <property type="nucleotide sequence ID" value="NM_001111711.1"/>
</dbReference>
<dbReference type="SMR" id="Q8VZY7"/>
<dbReference type="STRING" id="4577.Q8VZY7"/>
<dbReference type="PaxDb" id="4577-GRMZM2G118205_P01"/>
<dbReference type="EnsemblPlants" id="Zm00001eb173090_T001">
    <property type="protein sequence ID" value="Zm00001eb173090_P001"/>
    <property type="gene ID" value="Zm00001eb173090"/>
</dbReference>
<dbReference type="GeneID" id="542075"/>
<dbReference type="Gramene" id="Zm00001eb173090_T001">
    <property type="protein sequence ID" value="Zm00001eb173090_P001"/>
    <property type="gene ID" value="Zm00001eb173090"/>
</dbReference>
<dbReference type="KEGG" id="zma:542075"/>
<dbReference type="MaizeGDB" id="754919"/>
<dbReference type="eggNOG" id="KOG1034">
    <property type="taxonomic scope" value="Eukaryota"/>
</dbReference>
<dbReference type="HOGENOM" id="CLU_032683_2_0_1"/>
<dbReference type="InParanoid" id="Q8VZY7"/>
<dbReference type="OMA" id="HPLHAIG"/>
<dbReference type="OrthoDB" id="7318948at2759"/>
<dbReference type="Proteomes" id="UP000007305">
    <property type="component" value="Chromosome 4"/>
</dbReference>
<dbReference type="ExpressionAtlas" id="Q8VZY7">
    <property type="expression patterns" value="baseline and differential"/>
</dbReference>
<dbReference type="GO" id="GO:0035098">
    <property type="term" value="C:ESC/E(Z) complex"/>
    <property type="evidence" value="ECO:0000318"/>
    <property type="project" value="GO_Central"/>
</dbReference>
<dbReference type="GO" id="GO:0031507">
    <property type="term" value="P:heterochromatin formation"/>
    <property type="evidence" value="ECO:0000318"/>
    <property type="project" value="GO_Central"/>
</dbReference>
<dbReference type="GO" id="GO:0000122">
    <property type="term" value="P:negative regulation of transcription by RNA polymerase II"/>
    <property type="evidence" value="ECO:0000318"/>
    <property type="project" value="GO_Central"/>
</dbReference>
<dbReference type="FunFam" id="2.130.10.10:FF:000268">
    <property type="entry name" value="polycomb group protein FIE1"/>
    <property type="match status" value="1"/>
</dbReference>
<dbReference type="Gene3D" id="2.130.10.10">
    <property type="entry name" value="YVTN repeat-like/Quinoprotein amine dehydrogenase"/>
    <property type="match status" value="1"/>
</dbReference>
<dbReference type="InterPro" id="IPR051243">
    <property type="entry name" value="PcG_WD-repeat"/>
</dbReference>
<dbReference type="InterPro" id="IPR015943">
    <property type="entry name" value="WD40/YVTN_repeat-like_dom_sf"/>
</dbReference>
<dbReference type="InterPro" id="IPR019775">
    <property type="entry name" value="WD40_repeat_CS"/>
</dbReference>
<dbReference type="InterPro" id="IPR036322">
    <property type="entry name" value="WD40_repeat_dom_sf"/>
</dbReference>
<dbReference type="InterPro" id="IPR001680">
    <property type="entry name" value="WD40_rpt"/>
</dbReference>
<dbReference type="PANTHER" id="PTHR10253">
    <property type="entry name" value="POLYCOMB PROTEIN"/>
    <property type="match status" value="1"/>
</dbReference>
<dbReference type="Pfam" id="PF00400">
    <property type="entry name" value="WD40"/>
    <property type="match status" value="2"/>
</dbReference>
<dbReference type="SMART" id="SM00320">
    <property type="entry name" value="WD40"/>
    <property type="match status" value="6"/>
</dbReference>
<dbReference type="SUPFAM" id="SSF50978">
    <property type="entry name" value="WD40 repeat-like"/>
    <property type="match status" value="1"/>
</dbReference>
<dbReference type="PROSITE" id="PS00678">
    <property type="entry name" value="WD_REPEATS_1"/>
    <property type="match status" value="1"/>
</dbReference>
<dbReference type="PROSITE" id="PS50082">
    <property type="entry name" value="WD_REPEATS_2"/>
    <property type="match status" value="2"/>
</dbReference>
<dbReference type="PROSITE" id="PS50294">
    <property type="entry name" value="WD_REPEATS_REGION"/>
    <property type="match status" value="1"/>
</dbReference>
<organism>
    <name type="scientific">Zea mays</name>
    <name type="common">Maize</name>
    <dbReference type="NCBI Taxonomy" id="4577"/>
    <lineage>
        <taxon>Eukaryota</taxon>
        <taxon>Viridiplantae</taxon>
        <taxon>Streptophyta</taxon>
        <taxon>Embryophyta</taxon>
        <taxon>Tracheophyta</taxon>
        <taxon>Spermatophyta</taxon>
        <taxon>Magnoliopsida</taxon>
        <taxon>Liliopsida</taxon>
        <taxon>Poales</taxon>
        <taxon>Poaceae</taxon>
        <taxon>PACMAD clade</taxon>
        <taxon>Panicoideae</taxon>
        <taxon>Andropogonodae</taxon>
        <taxon>Andropogoneae</taxon>
        <taxon>Tripsacinae</taxon>
        <taxon>Zea</taxon>
    </lineage>
</organism>